<sequence>MRIPTSADIACGGNIIIRIAIKNSDIFILQPLRFCILPWFIARKRSPDSCWWQEYENYPPAFLKPFLFSSGYDQSQRRSRHRAYMHINQLASDLFWNAEFIPAIVHFFPEHRIFQIIFAFWREGFFAAPEARTGKKYRVIDIKPHRHCGTALRGYFQFVRPKPNEWVPVQQAWQR</sequence>
<name>HOBH_ECOLX</name>
<evidence type="ECO:0000305" key="1"/>
<proteinExistence type="uncertain"/>
<reference key="1">
    <citation type="journal article" date="1994" name="EMBO J.">
        <title>Parental strand recognition of the DNA replication origin by the outer membrane in Escherichia coli.</title>
        <authorList>
            <person name="Herrick J."/>
            <person name="Kern R."/>
            <person name="Guha S."/>
            <person name="Landoulsi A."/>
            <person name="Fayet O."/>
            <person name="Malki A."/>
            <person name="Kohiyama M."/>
        </authorList>
    </citation>
    <scope>NUCLEOTIDE SEQUENCE [GENOMIC DNA]</scope>
</reference>
<reference key="2">
    <citation type="unpublished observations" date="1994-11">
        <authorList>
            <person name="Bairoch A."/>
        </authorList>
    </citation>
    <scope>COMMENTS ABOUT THIS PROTEIN</scope>
</reference>
<accession>P36558</accession>
<protein>
    <recommendedName>
        <fullName>Putative uncharacterized protein HobH</fullName>
    </recommendedName>
</protein>
<comment type="caution">
    <text evidence="1">Could be the product of a pseudogene. This protein may not be the 'real' hobH because it is on the opposite frame of an ORF (aphA) which has been shown, by microsequencing, to exist. Furthermore the real hobH is probably seqA.</text>
</comment>
<dbReference type="EMBL" id="Z26592">
    <property type="protein sequence ID" value="CAA81346.1"/>
    <property type="status" value="ALT_SEQ"/>
    <property type="molecule type" value="Genomic_DNA"/>
</dbReference>
<dbReference type="PIR" id="S50061">
    <property type="entry name" value="S50061"/>
</dbReference>
<organism>
    <name type="scientific">Escherichia coli</name>
    <dbReference type="NCBI Taxonomy" id="562"/>
    <lineage>
        <taxon>Bacteria</taxon>
        <taxon>Pseudomonadati</taxon>
        <taxon>Pseudomonadota</taxon>
        <taxon>Gammaproteobacteria</taxon>
        <taxon>Enterobacterales</taxon>
        <taxon>Enterobacteriaceae</taxon>
        <taxon>Escherichia</taxon>
    </lineage>
</organism>
<gene>
    <name type="primary">hobH</name>
</gene>
<feature type="chain" id="PRO_0000169845" description="Putative uncharacterized protein HobH">
    <location>
        <begin position="1"/>
        <end position="175"/>
    </location>
</feature>